<accession>Q96PE3</accession>
<accession>O15326</accession>
<accession>Q13187</accession>
<accession>Q53TD8</accession>
<accession>Q8TC02</accession>
<protein>
    <recommendedName>
        <fullName evidence="16">Inositol polyphosphate-4-phosphatase type I A</fullName>
    </recommendedName>
    <alternativeName>
        <fullName evidence="11">Inositol polyphosphate 4-phosphatase type I</fullName>
    </alternativeName>
    <alternativeName>
        <fullName>Type I inositol 3,4-bisphosphate 4-phosphatase</fullName>
        <ecNumber evidence="5 6 8">3.1.3.66</ecNumber>
    </alternativeName>
</protein>
<keyword id="KW-0025">Alternative splicing</keyword>
<keyword id="KW-1003">Cell membrane</keyword>
<keyword id="KW-0963">Cytoplasm</keyword>
<keyword id="KW-0967">Endosome</keyword>
<keyword id="KW-0378">Hydrolase</keyword>
<keyword id="KW-0443">Lipid metabolism</keyword>
<keyword id="KW-0472">Membrane</keyword>
<keyword id="KW-0539">Nucleus</keyword>
<keyword id="KW-0597">Phosphoprotein</keyword>
<keyword id="KW-1267">Proteomics identification</keyword>
<keyword id="KW-1185">Reference proteome</keyword>
<keyword id="KW-0770">Synapse</keyword>
<sequence>MTAREHSPRHGARARAMQRASTIDVAADMLGLSLAGNIQDPDEPILEFSLACSELHTPSLDRKPNSFVAVSVTTPPQAFWTKHAQTEIIEGTNNPIFLSSIAFFQDSLINQMTQVKLSVYDVKDRSQGTMYLLGSGTFIVKDLLQDRHHRLHLTLRSAESDRVGNITVIGWQMEEKSDQRPPVTRSVDTVNGRMVLPVDESLTEALGIRSKYASLRKDTLLKSVFGGAICRMYRFPTTDGNHLRILEQMAESVLSLHVPRQFVKLLLEEDAARVCELEELGELSPCWESLRRQIVTQYQTIILTYQENLTDLHQYRGPSFKASSLKADKKLEFVPTNLHIQRMRVQDDGGSDQNYDIVTIGAPAAHCQGFKSGGLRKKLHKFEETKKHFEECCTSSGCQSIIYIPQDVVRAKEIIAQINTLKTQVSYYAERLSRAAKDRSATGLERTLAILADKTRQLVTVCDCKLLANSIHGLNAARPDYIASKASPTSTEEEQVMLRNDQDTLMARWTGRNSRSSLQVDWHEEEWEKVWLNVDKSLECIIQRVDKLLQKERLHGEGCEDVFPCAGSCTSKKGNPDSHAYWIRPEDPFCDVPSSPCPSTMPSTACHPHLTTHCSPPPEESSPGEWSEALYPLLTTLTDCVAMMSDKAKKAMVFLLMQDSAPTIATYLSLQYRRDVVFCQTLTALICGFIIKLRNCLHDDGFLRQLYTIGLLAQFESLLSTYGEELAMLEDMSLGIMDLRNVTFKVTQATSSASADMLPVITGNRDGFNVRVPLPGPLFDALPREIQSGMLLRVQPVLFNVGINEQQTLAERFGDTSLQEVINVESLVRLNSYFEQFKEVLPEDCLPRSRSQTCLPELLRFLGQNVHARKNKNVDILWQAAEICRRLNGVRFTSCKSAKDRTAMSVTLEQCLILQHEHGMAPQVFTQALECMRSEGCRRENTMKNVGSRKYAFNSLQLKAFPKHYRPPEGTYGKVET</sequence>
<organism>
    <name type="scientific">Homo sapiens</name>
    <name type="common">Human</name>
    <dbReference type="NCBI Taxonomy" id="9606"/>
    <lineage>
        <taxon>Eukaryota</taxon>
        <taxon>Metazoa</taxon>
        <taxon>Chordata</taxon>
        <taxon>Craniata</taxon>
        <taxon>Vertebrata</taxon>
        <taxon>Euteleostomi</taxon>
        <taxon>Mammalia</taxon>
        <taxon>Eutheria</taxon>
        <taxon>Euarchontoglires</taxon>
        <taxon>Primates</taxon>
        <taxon>Haplorrhini</taxon>
        <taxon>Catarrhini</taxon>
        <taxon>Hominidae</taxon>
        <taxon>Homo</taxon>
    </lineage>
</organism>
<name>INP4A_HUMAN</name>
<comment type="function">
    <text evidence="1 2 5 6 8">Catalyzes the hydrolysis of the 4-position phosphate of phosphatidylinositol 3,4-bisphosphate (PtdIns(3,4)P2) (PubMed:15716355, PubMed:20463662). Also catalyzes inositol 1,3,4-trisphosphate and inositol 1,4-bisphosphate (By similarity). Antagonizes the PI3K-AKT/PKB signaling pathway by dephosphorylating phosphoinositides and thereby modulating cell cycle progression and cell survival (By similarity) (PubMed:30071275). May protect neurons from excitotoxic cell death by regulating the synaptic localization of cell surface N-methyl-D-aspartate-type glutamate receptors (NMDARs) and NMDAR-mediated excitatory postsynaptic current (By similarity).</text>
</comment>
<comment type="function">
    <molecule>Isoform 4</molecule>
    <text evidence="9">Displays no 4-phosphatase activity for PtdIns(3,4)P2, Ins(3,4)P2, or Ins(1,3,4)P3.</text>
</comment>
<comment type="catalytic activity">
    <reaction evidence="5 6">
        <text>a 1,2-diacyl-sn-glycero-3-phospho-(1D-myo-inositol-3,4-bisphosphate) + H2O = a 1,2-diacyl-sn-glycero-3-phospho-(1D-myo-inositol-3-phosphate) + phosphate</text>
        <dbReference type="Rhea" id="RHEA:17193"/>
        <dbReference type="ChEBI" id="CHEBI:15377"/>
        <dbReference type="ChEBI" id="CHEBI:43474"/>
        <dbReference type="ChEBI" id="CHEBI:57658"/>
        <dbReference type="ChEBI" id="CHEBI:58088"/>
        <dbReference type="EC" id="3.1.3.66"/>
    </reaction>
    <physiologicalReaction direction="left-to-right" evidence="15">
        <dbReference type="Rhea" id="RHEA:17194"/>
    </physiologicalReaction>
</comment>
<comment type="catalytic activity">
    <reaction evidence="1">
        <text>1D-myo-inositol 3,4-bisphosphate + H2O = 1D-myo-inositol 3-phosphate + phosphate</text>
        <dbReference type="Rhea" id="RHEA:43388"/>
        <dbReference type="ChEBI" id="CHEBI:15377"/>
        <dbReference type="ChEBI" id="CHEBI:43474"/>
        <dbReference type="ChEBI" id="CHEBI:58401"/>
        <dbReference type="ChEBI" id="CHEBI:83241"/>
    </reaction>
    <physiologicalReaction direction="left-to-right" evidence="1">
        <dbReference type="Rhea" id="RHEA:43389"/>
    </physiologicalReaction>
</comment>
<comment type="catalytic activity">
    <reaction evidence="1">
        <text>1D-myo-inositol 1,3,4-trisphosphate + H2O = 1D-myo-inositol 1,3-bisphosphate + phosphate</text>
        <dbReference type="Rhea" id="RHEA:43392"/>
        <dbReference type="ChEBI" id="CHEBI:15377"/>
        <dbReference type="ChEBI" id="CHEBI:43474"/>
        <dbReference type="ChEBI" id="CHEBI:58414"/>
        <dbReference type="ChEBI" id="CHEBI:83242"/>
    </reaction>
    <physiologicalReaction direction="left-to-right" evidence="1">
        <dbReference type="Rhea" id="RHEA:43393"/>
    </physiologicalReaction>
</comment>
<comment type="pathway">
    <text evidence="5 6">Signal transduction; phosphatidylinositol signaling pathway.</text>
</comment>
<comment type="subunit">
    <text evidence="7">Interacts with INPP5F.</text>
</comment>
<comment type="subcellular location">
    <subcellularLocation>
        <location evidence="5">Early endosome membrane</location>
    </subcellularLocation>
    <subcellularLocation>
        <location evidence="5">Recycling endosome membrane</location>
    </subcellularLocation>
    <subcellularLocation>
        <location evidence="5">Cell membrane</location>
    </subcellularLocation>
    <subcellularLocation>
        <location evidence="8">Nucleus</location>
    </subcellularLocation>
    <subcellularLocation>
        <location evidence="8">Cytoplasm</location>
    </subcellularLocation>
    <subcellularLocation>
        <location evidence="2">Postsynaptic density</location>
    </subcellularLocation>
    <text evidence="5 8">Translocates to the plasma membrane upon EGF stimulation (PubMed:15716355). Shuttles between the cytoplasm and the nucleus, depending on the cell cycle stage, with highest amounts detected in the nucleus during the G0/G1phase (PubMed:30071275).</text>
</comment>
<comment type="alternative products">
    <event type="alternative splicing"/>
    <isoform>
        <id>Q96PE3-1</id>
        <name>1</name>
        <name>Alpha-3</name>
        <sequence type="displayed"/>
    </isoform>
    <isoform>
        <id>Q96PE3-2</id>
        <name>2</name>
        <name>Alpha-1</name>
        <sequence type="described" ref="VSP_015241"/>
    </isoform>
    <isoform>
        <id>Q96PE3-3</id>
        <name>3</name>
        <sequence type="described" ref="VSP_015240"/>
    </isoform>
    <isoform>
        <id>Q96PE3-4</id>
        <name>4</name>
        <name>Beta</name>
        <sequence type="described" ref="VSP_015241 VSP_015242"/>
    </isoform>
</comment>
<comment type="tissue specificity">
    <text evidence="4">Isoform 1 is expressed in the platelets, MEG-01 megakaryocytes and Jurkat T-cells. Isoform 2 is expressed in the brain.</text>
</comment>
<comment type="miscellaneous">
    <molecule>Isoform 4</molecule>
    <text evidence="14">Inactive.</text>
</comment>
<comment type="similarity">
    <text evidence="14">Belongs to the inositol 3,4-bisphosphate 4-phosphatase family.</text>
</comment>
<feature type="chain" id="PRO_0000190232" description="Inositol polyphosphate-4-phosphatase type I A">
    <location>
        <begin position="1"/>
        <end position="977"/>
    </location>
</feature>
<feature type="domain" description="C2" evidence="3">
    <location>
        <begin position="26"/>
        <end position="153"/>
    </location>
</feature>
<feature type="active site" description="Phosphocysteine intermediate" evidence="15">
    <location>
        <position position="895"/>
    </location>
</feature>
<feature type="modified residue" description="Phosphotyrosine" evidence="17">
    <location>
        <position position="355"/>
    </location>
</feature>
<feature type="modified residue" description="Phosphoserine" evidence="18 19">
    <location>
        <position position="487"/>
    </location>
</feature>
<feature type="splice variant" id="VSP_015240" description="In isoform 3." evidence="10">
    <location>
        <begin position="389"/>
        <end position="393"/>
    </location>
</feature>
<feature type="splice variant" id="VSP_015241" description="In isoform 2 and isoform 4." evidence="12 13">
    <original>GNPDSHAYWIRPEDPFCDVPSSPCPSTMPSTACHPHLTTH</original>
    <variation>D</variation>
    <location>
        <begin position="574"/>
        <end position="613"/>
    </location>
</feature>
<feature type="splice variant" id="VSP_015242" description="In isoform 4." evidence="13">
    <original>EGCRRENTMKNVGSRKYAFNSLQLKAFPKHYRPPEGTYGKVET</original>
    <variation>IGTREVVTQKNLSGLVPIRDLRLDPSLLCSIPLLALSPNLLIVWLFLSIAYLVTKLRCK</variation>
    <location>
        <begin position="935"/>
        <end position="977"/>
    </location>
</feature>
<feature type="sequence variant" id="VAR_059359" description="In dbSNP:rs2278206.">
    <original>T</original>
    <variation>A</variation>
    <location>
        <position position="604"/>
    </location>
</feature>
<feature type="mutagenesis site" description="Complete loss of lipid phosphatase activity." evidence="5">
    <original>D</original>
    <variation>N</variation>
    <location>
        <position position="731"/>
    </location>
</feature>
<feature type="mutagenesis site" description="Does not rescue the wortmannin-induced dilation of endosomes due to accumulation of (PtdIns(3,4)P2)." evidence="5">
    <original>C</original>
    <variation>S</variation>
    <location>
        <position position="895"/>
    </location>
</feature>
<feature type="sequence conflict" description="In Ref. 5; AAH28361." evidence="14" ref="5">
    <original>G</original>
    <variation>E</variation>
    <location>
        <position position="767"/>
    </location>
</feature>
<gene>
    <name type="primary">INPP4A</name>
</gene>
<dbReference type="EC" id="3.1.3.66" evidence="5 6 8"/>
<dbReference type="EMBL" id="U26398">
    <property type="protein sequence ID" value="AAB01068.1"/>
    <property type="molecule type" value="mRNA"/>
</dbReference>
<dbReference type="EMBL" id="U96919">
    <property type="protein sequence ID" value="AAB72150.1"/>
    <property type="molecule type" value="mRNA"/>
</dbReference>
<dbReference type="EMBL" id="AF368319">
    <property type="protein sequence ID" value="AAK58870.1"/>
    <property type="molecule type" value="mRNA"/>
</dbReference>
<dbReference type="EMBL" id="AC010134">
    <property type="protein sequence ID" value="AAX93230.1"/>
    <property type="molecule type" value="Genomic_DNA"/>
</dbReference>
<dbReference type="EMBL" id="BC028361">
    <property type="protein sequence ID" value="AAH28361.1"/>
    <property type="molecule type" value="mRNA"/>
</dbReference>
<dbReference type="CCDS" id="CCDS46369.1">
    <molecule id="Q96PE3-1"/>
</dbReference>
<dbReference type="CCDS" id="CCDS46370.1">
    <molecule id="Q96PE3-2"/>
</dbReference>
<dbReference type="CCDS" id="CCDS46371.1">
    <molecule id="Q96PE3-3"/>
</dbReference>
<dbReference type="CCDS" id="CCDS46372.1">
    <molecule id="Q96PE3-4"/>
</dbReference>
<dbReference type="PIR" id="B57487">
    <property type="entry name" value="B57487"/>
</dbReference>
<dbReference type="RefSeq" id="NP_001127696.1">
    <molecule id="Q96PE3-1"/>
    <property type="nucleotide sequence ID" value="NM_001134224.2"/>
</dbReference>
<dbReference type="RefSeq" id="NP_001127697.1">
    <molecule id="Q96PE3-3"/>
    <property type="nucleotide sequence ID" value="NM_001134225.2"/>
</dbReference>
<dbReference type="RefSeq" id="NP_001338356.1">
    <molecule id="Q96PE3-2"/>
    <property type="nucleotide sequence ID" value="NM_001351427.2"/>
</dbReference>
<dbReference type="RefSeq" id="NP_001557.1">
    <molecule id="Q96PE3-4"/>
    <property type="nucleotide sequence ID" value="NM_001566.2"/>
</dbReference>
<dbReference type="RefSeq" id="NP_004018.1">
    <molecule id="Q96PE3-2"/>
    <property type="nucleotide sequence ID" value="NM_004027.3"/>
</dbReference>
<dbReference type="RefSeq" id="XP_016859487.1">
    <property type="nucleotide sequence ID" value="XM_017003998.1"/>
</dbReference>
<dbReference type="RefSeq" id="XP_047300155.1">
    <molecule id="Q96PE3-3"/>
    <property type="nucleotide sequence ID" value="XM_047444199.1"/>
</dbReference>
<dbReference type="SMR" id="Q96PE3"/>
<dbReference type="BioGRID" id="109843">
    <property type="interactions" value="18"/>
</dbReference>
<dbReference type="FunCoup" id="Q96PE3">
    <property type="interactions" value="2814"/>
</dbReference>
<dbReference type="IntAct" id="Q96PE3">
    <property type="interactions" value="5"/>
</dbReference>
<dbReference type="MINT" id="Q96PE3"/>
<dbReference type="STRING" id="9606.ENSP00000074304"/>
<dbReference type="SwissLipids" id="SLP:000000900"/>
<dbReference type="DEPOD" id="INPP4A"/>
<dbReference type="GlyCosmos" id="Q96PE3">
    <property type="glycosylation" value="1 site, 1 glycan"/>
</dbReference>
<dbReference type="GlyGen" id="Q96PE3">
    <property type="glycosylation" value="1 site, 1 O-linked glycan (1 site)"/>
</dbReference>
<dbReference type="iPTMnet" id="Q96PE3"/>
<dbReference type="MetOSite" id="Q96PE3"/>
<dbReference type="PhosphoSitePlus" id="Q96PE3"/>
<dbReference type="BioMuta" id="INPP4A"/>
<dbReference type="DMDM" id="73920059"/>
<dbReference type="jPOST" id="Q96PE3"/>
<dbReference type="MassIVE" id="Q96PE3"/>
<dbReference type="PaxDb" id="9606-ENSP00000074304"/>
<dbReference type="PeptideAtlas" id="Q96PE3"/>
<dbReference type="ProteomicsDB" id="77678">
    <molecule id="Q96PE3-1"/>
</dbReference>
<dbReference type="ProteomicsDB" id="77679">
    <molecule id="Q96PE3-2"/>
</dbReference>
<dbReference type="ProteomicsDB" id="77680">
    <molecule id="Q96PE3-3"/>
</dbReference>
<dbReference type="ProteomicsDB" id="77681">
    <molecule id="Q96PE3-4"/>
</dbReference>
<dbReference type="Pumba" id="Q96PE3"/>
<dbReference type="Antibodypedia" id="41266">
    <property type="antibodies" value="102 antibodies from 23 providers"/>
</dbReference>
<dbReference type="DNASU" id="3631"/>
<dbReference type="Ensembl" id="ENST00000409016.8">
    <molecule id="Q96PE3-2"/>
    <property type="protein sequence ID" value="ENSP00000386704.3"/>
    <property type="gene ID" value="ENSG00000040933.17"/>
</dbReference>
<dbReference type="Ensembl" id="ENST00000409540.7">
    <molecule id="Q96PE3-4"/>
    <property type="protein sequence ID" value="ENSP00000387294.3"/>
    <property type="gene ID" value="ENSG00000040933.17"/>
</dbReference>
<dbReference type="Ensembl" id="ENST00000409851.8">
    <molecule id="Q96PE3-3"/>
    <property type="protein sequence ID" value="ENSP00000386777.4"/>
    <property type="gene ID" value="ENSG00000040933.17"/>
</dbReference>
<dbReference type="Ensembl" id="ENST00000523221.2">
    <molecule id="Q96PE3-1"/>
    <property type="protein sequence ID" value="ENSP00000427722.1"/>
    <property type="gene ID" value="ENSG00000040933.17"/>
</dbReference>
<dbReference type="GeneID" id="3631"/>
<dbReference type="KEGG" id="hsa:3631"/>
<dbReference type="MANE-Select" id="ENST00000409851.8">
    <molecule id="Q96PE3-3"/>
    <property type="protein sequence ID" value="ENSP00000386777.4"/>
    <property type="RefSeq nucleotide sequence ID" value="NM_001134225.2"/>
    <property type="RefSeq protein sequence ID" value="NP_001127697.1"/>
</dbReference>
<dbReference type="UCSC" id="uc002syx.4">
    <molecule id="Q96PE3-1"/>
    <property type="organism name" value="human"/>
</dbReference>
<dbReference type="AGR" id="HGNC:6074"/>
<dbReference type="CTD" id="3631"/>
<dbReference type="DisGeNET" id="3631"/>
<dbReference type="GeneCards" id="INPP4A"/>
<dbReference type="HGNC" id="HGNC:6074">
    <property type="gene designation" value="INPP4A"/>
</dbReference>
<dbReference type="HPA" id="ENSG00000040933">
    <property type="expression patterns" value="Low tissue specificity"/>
</dbReference>
<dbReference type="MalaCards" id="INPP4A"/>
<dbReference type="MIM" id="600916">
    <property type="type" value="gene"/>
</dbReference>
<dbReference type="neXtProt" id="NX_Q96PE3"/>
<dbReference type="OpenTargets" id="ENSG00000040933"/>
<dbReference type="PharmGKB" id="PA29882"/>
<dbReference type="VEuPathDB" id="HostDB:ENSG00000040933"/>
<dbReference type="eggNOG" id="KOG4428">
    <property type="taxonomic scope" value="Eukaryota"/>
</dbReference>
<dbReference type="GeneTree" id="ENSGT00940000157360"/>
<dbReference type="HOGENOM" id="CLU_007802_0_0_1"/>
<dbReference type="InParanoid" id="Q96PE3"/>
<dbReference type="OMA" id="CRRENTY"/>
<dbReference type="OrthoDB" id="159395at2759"/>
<dbReference type="PAN-GO" id="Q96PE3">
    <property type="GO annotations" value="2 GO annotations based on evolutionary models"/>
</dbReference>
<dbReference type="PhylomeDB" id="Q96PE3"/>
<dbReference type="TreeFam" id="TF325637"/>
<dbReference type="BioCyc" id="MetaCyc:HS00551-MONOMER"/>
<dbReference type="BRENDA" id="3.1.3.66">
    <property type="organism ID" value="2681"/>
</dbReference>
<dbReference type="PathwayCommons" id="Q96PE3"/>
<dbReference type="Reactome" id="R-HSA-1660499">
    <property type="pathway name" value="Synthesis of PIPs at the plasma membrane"/>
</dbReference>
<dbReference type="Reactome" id="R-HSA-1660516">
    <property type="pathway name" value="Synthesis of PIPs at the early endosome membrane"/>
</dbReference>
<dbReference type="Reactome" id="R-HSA-1855183">
    <property type="pathway name" value="Synthesis of IP2, IP, and Ins in the cytosol"/>
</dbReference>
<dbReference type="SignaLink" id="Q96PE3"/>
<dbReference type="UniPathway" id="UPA00944"/>
<dbReference type="BioGRID-ORCS" id="3631">
    <property type="hits" value="16 hits in 1164 CRISPR screens"/>
</dbReference>
<dbReference type="ChiTaRS" id="INPP4A">
    <property type="organism name" value="human"/>
</dbReference>
<dbReference type="GeneWiki" id="INPP4A"/>
<dbReference type="GenomeRNAi" id="3631"/>
<dbReference type="Pharos" id="Q96PE3">
    <property type="development level" value="Tbio"/>
</dbReference>
<dbReference type="PRO" id="PR:Q96PE3"/>
<dbReference type="Proteomes" id="UP000005640">
    <property type="component" value="Chromosome 2"/>
</dbReference>
<dbReference type="RNAct" id="Q96PE3">
    <property type="molecule type" value="protein"/>
</dbReference>
<dbReference type="Bgee" id="ENSG00000040933">
    <property type="expression patterns" value="Expressed in Brodmann (1909) area 23 and 192 other cell types or tissues"/>
</dbReference>
<dbReference type="ExpressionAtlas" id="Q96PE3">
    <property type="expression patterns" value="baseline and differential"/>
</dbReference>
<dbReference type="GO" id="GO:0005737">
    <property type="term" value="C:cytoplasm"/>
    <property type="evidence" value="ECO:0000314"/>
    <property type="project" value="UniProtKB"/>
</dbReference>
<dbReference type="GO" id="GO:0005829">
    <property type="term" value="C:cytosol"/>
    <property type="evidence" value="ECO:0000304"/>
    <property type="project" value="Reactome"/>
</dbReference>
<dbReference type="GO" id="GO:0031901">
    <property type="term" value="C:early endosome membrane"/>
    <property type="evidence" value="ECO:0007669"/>
    <property type="project" value="UniProtKB-SubCell"/>
</dbReference>
<dbReference type="GO" id="GO:0031965">
    <property type="term" value="C:nuclear membrane"/>
    <property type="evidence" value="ECO:0000314"/>
    <property type="project" value="HPA"/>
</dbReference>
<dbReference type="GO" id="GO:0005654">
    <property type="term" value="C:nucleoplasm"/>
    <property type="evidence" value="ECO:0000314"/>
    <property type="project" value="HPA"/>
</dbReference>
<dbReference type="GO" id="GO:0005634">
    <property type="term" value="C:nucleus"/>
    <property type="evidence" value="ECO:0000314"/>
    <property type="project" value="UniProtKB"/>
</dbReference>
<dbReference type="GO" id="GO:0005886">
    <property type="term" value="C:plasma membrane"/>
    <property type="evidence" value="ECO:0007669"/>
    <property type="project" value="UniProtKB-SubCell"/>
</dbReference>
<dbReference type="GO" id="GO:0014069">
    <property type="term" value="C:postsynaptic density"/>
    <property type="evidence" value="ECO:0000250"/>
    <property type="project" value="UniProtKB"/>
</dbReference>
<dbReference type="GO" id="GO:0055038">
    <property type="term" value="C:recycling endosome membrane"/>
    <property type="evidence" value="ECO:0007669"/>
    <property type="project" value="UniProtKB-SubCell"/>
</dbReference>
<dbReference type="GO" id="GO:0017161">
    <property type="term" value="F:inositol-1,3,4-trisphosphate 4-phosphatase activity"/>
    <property type="evidence" value="ECO:0000304"/>
    <property type="project" value="Reactome"/>
</dbReference>
<dbReference type="GO" id="GO:0052828">
    <property type="term" value="F:inositol-3,4-bisphosphate 4-phosphatase activity"/>
    <property type="evidence" value="ECO:0000304"/>
    <property type="project" value="Reactome"/>
</dbReference>
<dbReference type="GO" id="GO:0016316">
    <property type="term" value="F:phosphatidylinositol-3,4-bisphosphate 4-phosphatase activity"/>
    <property type="evidence" value="ECO:0000318"/>
    <property type="project" value="GO_Central"/>
</dbReference>
<dbReference type="GO" id="GO:0043647">
    <property type="term" value="P:inositol phosphate metabolic process"/>
    <property type="evidence" value="ECO:0000304"/>
    <property type="project" value="Reactome"/>
</dbReference>
<dbReference type="GO" id="GO:0006661">
    <property type="term" value="P:phosphatidylinositol biosynthetic process"/>
    <property type="evidence" value="ECO:0000304"/>
    <property type="project" value="Reactome"/>
</dbReference>
<dbReference type="GO" id="GO:0007165">
    <property type="term" value="P:signal transduction"/>
    <property type="evidence" value="ECO:0000304"/>
    <property type="project" value="ProtInc"/>
</dbReference>
<dbReference type="CDD" id="cd04048">
    <property type="entry name" value="C2A_Copine"/>
    <property type="match status" value="1"/>
</dbReference>
<dbReference type="FunFam" id="2.60.40.150:FF:000038">
    <property type="entry name" value="Type I inositol 3,4-bisphosphate 4-phosphatase"/>
    <property type="match status" value="1"/>
</dbReference>
<dbReference type="Gene3D" id="2.60.40.150">
    <property type="entry name" value="C2 domain"/>
    <property type="match status" value="1"/>
</dbReference>
<dbReference type="InterPro" id="IPR000008">
    <property type="entry name" value="C2_dom"/>
</dbReference>
<dbReference type="InterPro" id="IPR035892">
    <property type="entry name" value="C2_domain_sf"/>
</dbReference>
<dbReference type="InterPro" id="IPR039034">
    <property type="entry name" value="INPP4"/>
</dbReference>
<dbReference type="PANTHER" id="PTHR12187">
    <property type="entry name" value="AGAP000124-PA"/>
    <property type="match status" value="1"/>
</dbReference>
<dbReference type="PANTHER" id="PTHR12187:SF4">
    <property type="entry name" value="INOSITOL POLYPHOSPHATE-4-PHOSPHATASE TYPE I A"/>
    <property type="match status" value="1"/>
</dbReference>
<dbReference type="SUPFAM" id="SSF49562">
    <property type="entry name" value="C2 domain (Calcium/lipid-binding domain, CaLB)"/>
    <property type="match status" value="1"/>
</dbReference>
<dbReference type="PROSITE" id="PS50004">
    <property type="entry name" value="C2"/>
    <property type="match status" value="1"/>
</dbReference>
<proteinExistence type="evidence at protein level"/>
<reference key="1">
    <citation type="journal article" date="1995" name="J. Biol. Chem.">
        <title>The isolation and characterization of cDNA encoding human and rat brain inositol polyphosphate 4-phosphatase.</title>
        <authorList>
            <person name="Norris F.A."/>
            <person name="Auethavekiat V."/>
            <person name="Majerus P.W."/>
        </authorList>
    </citation>
    <scope>NUCLEOTIDE SEQUENCE [MRNA] (ISOFORM 2)</scope>
    <source>
        <tissue>Brain</tissue>
    </source>
</reference>
<reference key="2">
    <citation type="journal article" date="1997" name="J. Biol. Chem.">
        <title>The cDNA cloning and characterization of inositol polyphosphate 4-phosphatase type II. Evidence for conserved alternative splicing in the 4-phosphatase family.</title>
        <authorList>
            <person name="Norris F.A."/>
            <person name="Atkins R.C."/>
            <person name="Majerus P.W."/>
        </authorList>
    </citation>
    <scope>NUCLEOTIDE SEQUENCE [MRNA] (ISOFORM 4)</scope>
    <source>
        <tissue>Brain</tissue>
    </source>
</reference>
<reference key="3">
    <citation type="journal article" date="2001" name="Biochem. Biophys. Res. Commun.">
        <title>Identification of a novel spliceoform of inositol polyphosphate 4-phosphatase type Ialpha expressed in human platelets: structure of human inositol polyphosphate 4-phosphatase type I gene.</title>
        <authorList>
            <person name="Shearn C.T."/>
            <person name="Walker J."/>
            <person name="Norris F.A."/>
        </authorList>
    </citation>
    <scope>NUCLEOTIDE SEQUENCE [MRNA] (ISOFORM 1)</scope>
    <scope>TISSUE SPECIFICITY</scope>
</reference>
<reference key="4">
    <citation type="journal article" date="2005" name="Nature">
        <title>Generation and annotation of the DNA sequences of human chromosomes 2 and 4.</title>
        <authorList>
            <person name="Hillier L.W."/>
            <person name="Graves T.A."/>
            <person name="Fulton R.S."/>
            <person name="Fulton L.A."/>
            <person name="Pepin K.H."/>
            <person name="Minx P."/>
            <person name="Wagner-McPherson C."/>
            <person name="Layman D."/>
            <person name="Wylie K."/>
            <person name="Sekhon M."/>
            <person name="Becker M.C."/>
            <person name="Fewell G.A."/>
            <person name="Delehaunty K.D."/>
            <person name="Miner T.L."/>
            <person name="Nash W.E."/>
            <person name="Kremitzki C."/>
            <person name="Oddy L."/>
            <person name="Du H."/>
            <person name="Sun H."/>
            <person name="Bradshaw-Cordum H."/>
            <person name="Ali J."/>
            <person name="Carter J."/>
            <person name="Cordes M."/>
            <person name="Harris A."/>
            <person name="Isak A."/>
            <person name="van Brunt A."/>
            <person name="Nguyen C."/>
            <person name="Du F."/>
            <person name="Courtney L."/>
            <person name="Kalicki J."/>
            <person name="Ozersky P."/>
            <person name="Abbott S."/>
            <person name="Armstrong J."/>
            <person name="Belter E.A."/>
            <person name="Caruso L."/>
            <person name="Cedroni M."/>
            <person name="Cotton M."/>
            <person name="Davidson T."/>
            <person name="Desai A."/>
            <person name="Elliott G."/>
            <person name="Erb T."/>
            <person name="Fronick C."/>
            <person name="Gaige T."/>
            <person name="Haakenson W."/>
            <person name="Haglund K."/>
            <person name="Holmes A."/>
            <person name="Harkins R."/>
            <person name="Kim K."/>
            <person name="Kruchowski S.S."/>
            <person name="Strong C.M."/>
            <person name="Grewal N."/>
            <person name="Goyea E."/>
            <person name="Hou S."/>
            <person name="Levy A."/>
            <person name="Martinka S."/>
            <person name="Mead K."/>
            <person name="McLellan M.D."/>
            <person name="Meyer R."/>
            <person name="Randall-Maher J."/>
            <person name="Tomlinson C."/>
            <person name="Dauphin-Kohlberg S."/>
            <person name="Kozlowicz-Reilly A."/>
            <person name="Shah N."/>
            <person name="Swearengen-Shahid S."/>
            <person name="Snider J."/>
            <person name="Strong J.T."/>
            <person name="Thompson J."/>
            <person name="Yoakum M."/>
            <person name="Leonard S."/>
            <person name="Pearman C."/>
            <person name="Trani L."/>
            <person name="Radionenko M."/>
            <person name="Waligorski J.E."/>
            <person name="Wang C."/>
            <person name="Rock S.M."/>
            <person name="Tin-Wollam A.-M."/>
            <person name="Maupin R."/>
            <person name="Latreille P."/>
            <person name="Wendl M.C."/>
            <person name="Yang S.-P."/>
            <person name="Pohl C."/>
            <person name="Wallis J.W."/>
            <person name="Spieth J."/>
            <person name="Bieri T.A."/>
            <person name="Berkowicz N."/>
            <person name="Nelson J.O."/>
            <person name="Osborne J."/>
            <person name="Ding L."/>
            <person name="Meyer R."/>
            <person name="Sabo A."/>
            <person name="Shotland Y."/>
            <person name="Sinha P."/>
            <person name="Wohldmann P.E."/>
            <person name="Cook L.L."/>
            <person name="Hickenbotham M.T."/>
            <person name="Eldred J."/>
            <person name="Williams D."/>
            <person name="Jones T.A."/>
            <person name="She X."/>
            <person name="Ciccarelli F.D."/>
            <person name="Izaurralde E."/>
            <person name="Taylor J."/>
            <person name="Schmutz J."/>
            <person name="Myers R.M."/>
            <person name="Cox D.R."/>
            <person name="Huang X."/>
            <person name="McPherson J.D."/>
            <person name="Mardis E.R."/>
            <person name="Clifton S.W."/>
            <person name="Warren W.C."/>
            <person name="Chinwalla A.T."/>
            <person name="Eddy S.R."/>
            <person name="Marra M.A."/>
            <person name="Ovcharenko I."/>
            <person name="Furey T.S."/>
            <person name="Miller W."/>
            <person name="Eichler E.E."/>
            <person name="Bork P."/>
            <person name="Suyama M."/>
            <person name="Torrents D."/>
            <person name="Waterston R.H."/>
            <person name="Wilson R.K."/>
        </authorList>
    </citation>
    <scope>NUCLEOTIDE SEQUENCE [LARGE SCALE GENOMIC DNA]</scope>
</reference>
<reference key="5">
    <citation type="journal article" date="2004" name="Genome Res.">
        <title>The status, quality, and expansion of the NIH full-length cDNA project: the Mammalian Gene Collection (MGC).</title>
        <authorList>
            <consortium name="The MGC Project Team"/>
        </authorList>
    </citation>
    <scope>NUCLEOTIDE SEQUENCE [MRNA] (ISOFORM 3)</scope>
    <source>
        <tissue>Testis</tissue>
    </source>
</reference>
<reference key="6">
    <citation type="journal article" date="2005" name="Mol. Biol. Cell">
        <title>The type Ialpha inositol polyphosphate 4-phosphatase generates and terminates phosphoinositide 3-kinase signals on endosomes and the plasma membrane.</title>
        <authorList>
            <person name="Ivetac I."/>
            <person name="Munday A.D."/>
            <person name="Kisseleva M.V."/>
            <person name="Zhang X.M."/>
            <person name="Luff S."/>
            <person name="Tiganis T."/>
            <person name="Whisstock J.C."/>
            <person name="Rowe T."/>
            <person name="Majerus P.W."/>
            <person name="Mitchell C.A."/>
        </authorList>
    </citation>
    <scope>SUBCELLULAR LOCATION</scope>
    <scope>CATALYTIC ACTIVITY</scope>
    <scope>FUNCTION</scope>
    <scope>MUTAGENESIS OF ASP-731 AND CYS-895</scope>
    <scope>ACTIVE SITE</scope>
</reference>
<reference key="7">
    <citation type="journal article" date="2005" name="Nat. Biotechnol.">
        <title>Immunoaffinity profiling of tyrosine phosphorylation in cancer cells.</title>
        <authorList>
            <person name="Rush J."/>
            <person name="Moritz A."/>
            <person name="Lee K.A."/>
            <person name="Guo A."/>
            <person name="Goss V.L."/>
            <person name="Spek E.J."/>
            <person name="Zhang H."/>
            <person name="Zha X.-M."/>
            <person name="Polakiewicz R.D."/>
            <person name="Comb M.J."/>
        </authorList>
    </citation>
    <scope>PHOSPHORYLATION [LARGE SCALE ANALYSIS] AT TYR-355</scope>
    <scope>IDENTIFICATION BY MASS SPECTROMETRY [LARGE SCALE ANALYSIS]</scope>
</reference>
<reference key="8">
    <citation type="journal article" date="2009" name="Sci. Signal.">
        <title>Quantitative phosphoproteomic analysis of T cell receptor signaling reveals system-wide modulation of protein-protein interactions.</title>
        <authorList>
            <person name="Mayya V."/>
            <person name="Lundgren D.H."/>
            <person name="Hwang S.-I."/>
            <person name="Rezaul K."/>
            <person name="Wu L."/>
            <person name="Eng J.K."/>
            <person name="Rodionov V."/>
            <person name="Han D.K."/>
        </authorList>
    </citation>
    <scope>PHOSPHORYLATION [LARGE SCALE ANALYSIS] AT SER-487</scope>
    <scope>IDENTIFICATION BY MASS SPECTROMETRY [LARGE SCALE ANALYSIS]</scope>
    <source>
        <tissue>Leukemic T-cell</tissue>
    </source>
</reference>
<reference key="9">
    <citation type="journal article" date="2010" name="Nature">
        <title>The PtdIns(3,4)P(2) phosphatase INPP4A is a suppressor of excitotoxic neuronal death.</title>
        <authorList>
            <person name="Sasaki J."/>
            <person name="Kofuji S."/>
            <person name="Itoh R."/>
            <person name="Momiyama T."/>
            <person name="Takayama K."/>
            <person name="Murakami H."/>
            <person name="Chida S."/>
            <person name="Tsuya Y."/>
            <person name="Takasuga S."/>
            <person name="Eguchi S."/>
            <person name="Asanuma K."/>
            <person name="Horie Y."/>
            <person name="Miura K."/>
            <person name="Davies E.M."/>
            <person name="Mitchell C."/>
            <person name="Yamazaki M."/>
            <person name="Hirai H."/>
            <person name="Takenawa T."/>
            <person name="Suzuki A."/>
            <person name="Sasaki T."/>
        </authorList>
    </citation>
    <scope>CATALYTIC ACTIVITY</scope>
    <scope>FUNCTION</scope>
</reference>
<reference key="10">
    <citation type="journal article" date="2011" name="BMC Syst. Biol.">
        <title>Initial characterization of the human central proteome.</title>
        <authorList>
            <person name="Burkard T.R."/>
            <person name="Planyavsky M."/>
            <person name="Kaupe I."/>
            <person name="Breitwieser F.P."/>
            <person name="Buerckstuemmer T."/>
            <person name="Bennett K.L."/>
            <person name="Superti-Furga G."/>
            <person name="Colinge J."/>
        </authorList>
    </citation>
    <scope>IDENTIFICATION BY MASS SPECTROMETRY [LARGE SCALE ANALYSIS]</scope>
</reference>
<reference key="11">
    <citation type="journal article" date="2013" name="J. Proteome Res.">
        <title>Toward a comprehensive characterization of a human cancer cell phosphoproteome.</title>
        <authorList>
            <person name="Zhou H."/>
            <person name="Di Palma S."/>
            <person name="Preisinger C."/>
            <person name="Peng M."/>
            <person name="Polat A.N."/>
            <person name="Heck A.J."/>
            <person name="Mohammed S."/>
        </authorList>
    </citation>
    <scope>PHOSPHORYLATION [LARGE SCALE ANALYSIS] AT SER-487</scope>
    <scope>IDENTIFICATION BY MASS SPECTROMETRY [LARGE SCALE ANALYSIS]</scope>
    <source>
        <tissue>Cervix carcinoma</tissue>
        <tissue>Erythroleukemia</tissue>
    </source>
</reference>
<reference key="12">
    <citation type="journal article" date="2015" name="J. Cell Biol.">
        <title>Sac2/INPP5F is an inositol 4-phosphatase that functions in the endocytic pathway.</title>
        <authorList>
            <person name="Nakatsu F."/>
            <person name="Messa M."/>
            <person name="Nandez R."/>
            <person name="Czapla H."/>
            <person name="Zou Y."/>
            <person name="Strittmatter S.M."/>
            <person name="De Camilli P."/>
        </authorList>
    </citation>
    <scope>INTERACTION WITH INPP5F</scope>
</reference>
<reference key="13">
    <citation type="journal article" date="2018" name="Biochim. Biophys. Acta">
        <title>Novel nuclear translocation of inositol polyphosphate 4-phosphatase is associated with cell cycle, proliferation and survival.</title>
        <authorList>
            <person name="Chaudhuri R."/>
            <person name="Khanna K."/>
            <person name="Koundinya D."/>
            <person name="Pattnaik B."/>
            <person name="Vatsa D."/>
            <person name="Agrawal A."/>
            <person name="Ghosh B."/>
        </authorList>
    </citation>
    <scope>SUBCELLULAR LOCATION</scope>
    <scope>FUNCTION</scope>
    <scope>CATALYTIC ACTIVITY</scope>
</reference>
<evidence type="ECO:0000250" key="1">
    <source>
        <dbReference type="UniProtKB" id="Q62784"/>
    </source>
</evidence>
<evidence type="ECO:0000250" key="2">
    <source>
        <dbReference type="UniProtKB" id="Q9EPW0"/>
    </source>
</evidence>
<evidence type="ECO:0000255" key="3">
    <source>
        <dbReference type="PROSITE-ProRule" id="PRU00041"/>
    </source>
</evidence>
<evidence type="ECO:0000269" key="4">
    <source>
    </source>
</evidence>
<evidence type="ECO:0000269" key="5">
    <source>
    </source>
</evidence>
<evidence type="ECO:0000269" key="6">
    <source>
    </source>
</evidence>
<evidence type="ECO:0000269" key="7">
    <source>
    </source>
</evidence>
<evidence type="ECO:0000269" key="8">
    <source>
    </source>
</evidence>
<evidence type="ECO:0000269" key="9">
    <source>
    </source>
</evidence>
<evidence type="ECO:0000303" key="10">
    <source>
    </source>
</evidence>
<evidence type="ECO:0000303" key="11">
    <source>
    </source>
</evidence>
<evidence type="ECO:0000303" key="12">
    <source>
    </source>
</evidence>
<evidence type="ECO:0000303" key="13">
    <source>
    </source>
</evidence>
<evidence type="ECO:0000305" key="14"/>
<evidence type="ECO:0000305" key="15">
    <source>
    </source>
</evidence>
<evidence type="ECO:0000312" key="16">
    <source>
        <dbReference type="HGNC" id="HGNC:6074"/>
    </source>
</evidence>
<evidence type="ECO:0007744" key="17">
    <source>
    </source>
</evidence>
<evidence type="ECO:0007744" key="18">
    <source>
    </source>
</evidence>
<evidence type="ECO:0007744" key="19">
    <source>
    </source>
</evidence>